<feature type="chain" id="PRO_0000331246" description="Signal recognition particle receptor subunit beta">
    <location>
        <begin position="1"/>
        <end position="290"/>
    </location>
</feature>
<feature type="transmembrane region" description="Helical" evidence="5">
    <location>
        <begin position="44"/>
        <end position="64"/>
    </location>
</feature>
<feature type="binding site" evidence="1">
    <location>
        <begin position="92"/>
        <end position="100"/>
    </location>
    <ligand>
        <name>GTP</name>
        <dbReference type="ChEBI" id="CHEBI:37565"/>
    </ligand>
</feature>
<feature type="binding site" evidence="1">
    <location>
        <begin position="114"/>
        <end position="117"/>
    </location>
    <ligand>
        <name>GTP</name>
        <dbReference type="ChEBI" id="CHEBI:37565"/>
    </ligand>
</feature>
<feature type="binding site" evidence="1">
    <location>
        <position position="140"/>
    </location>
    <ligand>
        <name>GTP</name>
        <dbReference type="ChEBI" id="CHEBI:37565"/>
    </ligand>
</feature>
<feature type="binding site" evidence="1">
    <location>
        <position position="268"/>
    </location>
    <ligand>
        <name>GTP</name>
        <dbReference type="ChEBI" id="CHEBI:37565"/>
    </ligand>
</feature>
<accession>Q54XX1</accession>
<organism>
    <name type="scientific">Dictyostelium discoideum</name>
    <name type="common">Social amoeba</name>
    <dbReference type="NCBI Taxonomy" id="44689"/>
    <lineage>
        <taxon>Eukaryota</taxon>
        <taxon>Amoebozoa</taxon>
        <taxon>Evosea</taxon>
        <taxon>Eumycetozoa</taxon>
        <taxon>Dictyostelia</taxon>
        <taxon>Dictyosteliales</taxon>
        <taxon>Dictyosteliaceae</taxon>
        <taxon>Dictyostelium</taxon>
    </lineage>
</organism>
<sequence>MKDSAILNQLKVVLPPHIMEIIYFRYNQIDTYLKPYNLPIKTDVLLLALFTLIFIIIISKLFGSSGNKTRSVGGRTSNDKKVKRGVNIAILGLSNAGKTALLLNLTNVDKKISTHTSITTNNGVYITENKKKLPIIDVPGNGKAKASLPKILSNSACIIYVIDGTTFIDNSTQEAQYLYDILTNESVYQKKIPVLVFNNKMDLDSTIDTEQVKNILERELDDLRRTRGATPIVLGQEEDKKDIYLGIEGTPFQFDHLPNDVQFSNGSASPSNGELKEIDDIKNFIQTTTL</sequence>
<reference key="1">
    <citation type="journal article" date="2005" name="Nature">
        <title>The genome of the social amoeba Dictyostelium discoideum.</title>
        <authorList>
            <person name="Eichinger L."/>
            <person name="Pachebat J.A."/>
            <person name="Gloeckner G."/>
            <person name="Rajandream M.A."/>
            <person name="Sucgang R."/>
            <person name="Berriman M."/>
            <person name="Song J."/>
            <person name="Olsen R."/>
            <person name="Szafranski K."/>
            <person name="Xu Q."/>
            <person name="Tunggal B."/>
            <person name="Kummerfeld S."/>
            <person name="Madera M."/>
            <person name="Konfortov B.A."/>
            <person name="Rivero F."/>
            <person name="Bankier A.T."/>
            <person name="Lehmann R."/>
            <person name="Hamlin N."/>
            <person name="Davies R."/>
            <person name="Gaudet P."/>
            <person name="Fey P."/>
            <person name="Pilcher K."/>
            <person name="Chen G."/>
            <person name="Saunders D."/>
            <person name="Sodergren E.J."/>
            <person name="Davis P."/>
            <person name="Kerhornou A."/>
            <person name="Nie X."/>
            <person name="Hall N."/>
            <person name="Anjard C."/>
            <person name="Hemphill L."/>
            <person name="Bason N."/>
            <person name="Farbrother P."/>
            <person name="Desany B."/>
            <person name="Just E."/>
            <person name="Morio T."/>
            <person name="Rost R."/>
            <person name="Churcher C.M."/>
            <person name="Cooper J."/>
            <person name="Haydock S."/>
            <person name="van Driessche N."/>
            <person name="Cronin A."/>
            <person name="Goodhead I."/>
            <person name="Muzny D.M."/>
            <person name="Mourier T."/>
            <person name="Pain A."/>
            <person name="Lu M."/>
            <person name="Harper D."/>
            <person name="Lindsay R."/>
            <person name="Hauser H."/>
            <person name="James K.D."/>
            <person name="Quiles M."/>
            <person name="Madan Babu M."/>
            <person name="Saito T."/>
            <person name="Buchrieser C."/>
            <person name="Wardroper A."/>
            <person name="Felder M."/>
            <person name="Thangavelu M."/>
            <person name="Johnson D."/>
            <person name="Knights A."/>
            <person name="Loulseged H."/>
            <person name="Mungall K.L."/>
            <person name="Oliver K."/>
            <person name="Price C."/>
            <person name="Quail M.A."/>
            <person name="Urushihara H."/>
            <person name="Hernandez J."/>
            <person name="Rabbinowitsch E."/>
            <person name="Steffen D."/>
            <person name="Sanders M."/>
            <person name="Ma J."/>
            <person name="Kohara Y."/>
            <person name="Sharp S."/>
            <person name="Simmonds M.N."/>
            <person name="Spiegler S."/>
            <person name="Tivey A."/>
            <person name="Sugano S."/>
            <person name="White B."/>
            <person name="Walker D."/>
            <person name="Woodward J.R."/>
            <person name="Winckler T."/>
            <person name="Tanaka Y."/>
            <person name="Shaulsky G."/>
            <person name="Schleicher M."/>
            <person name="Weinstock G.M."/>
            <person name="Rosenthal A."/>
            <person name="Cox E.C."/>
            <person name="Chisholm R.L."/>
            <person name="Gibbs R.A."/>
            <person name="Loomis W.F."/>
            <person name="Platzer M."/>
            <person name="Kay R.R."/>
            <person name="Williams J.G."/>
            <person name="Dear P.H."/>
            <person name="Noegel A.A."/>
            <person name="Barrell B.G."/>
            <person name="Kuspa A."/>
        </authorList>
    </citation>
    <scope>NUCLEOTIDE SEQUENCE [LARGE SCALE GENOMIC DNA]</scope>
    <source>
        <strain>AX4</strain>
    </source>
</reference>
<gene>
    <name type="primary">srprb</name>
    <name type="ORF">DDB_G0278543</name>
</gene>
<name>SRPRB_DICDI</name>
<dbReference type="EMBL" id="AAFI02000023">
    <property type="protein sequence ID" value="EAL68444.1"/>
    <property type="molecule type" value="Genomic_DNA"/>
</dbReference>
<dbReference type="RefSeq" id="XP_642431.1">
    <property type="nucleotide sequence ID" value="XM_637339.1"/>
</dbReference>
<dbReference type="SMR" id="Q54XX1"/>
<dbReference type="FunCoup" id="Q54XX1">
    <property type="interactions" value="509"/>
</dbReference>
<dbReference type="STRING" id="44689.Q54XX1"/>
<dbReference type="PaxDb" id="44689-DDB0232374"/>
<dbReference type="EnsemblProtists" id="EAL68444">
    <property type="protein sequence ID" value="EAL68444"/>
    <property type="gene ID" value="DDB_G0278543"/>
</dbReference>
<dbReference type="GeneID" id="8621636"/>
<dbReference type="KEGG" id="ddi:DDB_G0278543"/>
<dbReference type="dictyBase" id="DDB_G0278543">
    <property type="gene designation" value="srpRB"/>
</dbReference>
<dbReference type="VEuPathDB" id="AmoebaDB:DDB_G0278543"/>
<dbReference type="eggNOG" id="KOG0090">
    <property type="taxonomic scope" value="Eukaryota"/>
</dbReference>
<dbReference type="HOGENOM" id="CLU_961161_0_0_1"/>
<dbReference type="InParanoid" id="Q54XX1"/>
<dbReference type="OMA" id="CWIDERA"/>
<dbReference type="PhylomeDB" id="Q54XX1"/>
<dbReference type="PRO" id="PR:Q54XX1"/>
<dbReference type="Proteomes" id="UP000002195">
    <property type="component" value="Chromosome 3"/>
</dbReference>
<dbReference type="GO" id="GO:0005785">
    <property type="term" value="C:signal recognition particle receptor complex"/>
    <property type="evidence" value="ECO:0000318"/>
    <property type="project" value="GO_Central"/>
</dbReference>
<dbReference type="GO" id="GO:0005525">
    <property type="term" value="F:GTP binding"/>
    <property type="evidence" value="ECO:0007669"/>
    <property type="project" value="UniProtKB-KW"/>
</dbReference>
<dbReference type="GO" id="GO:0045047">
    <property type="term" value="P:protein targeting to ER"/>
    <property type="evidence" value="ECO:0000318"/>
    <property type="project" value="GO_Central"/>
</dbReference>
<dbReference type="CDD" id="cd04105">
    <property type="entry name" value="SR_beta"/>
    <property type="match status" value="1"/>
</dbReference>
<dbReference type="Gene3D" id="3.40.50.300">
    <property type="entry name" value="P-loop containing nucleotide triphosphate hydrolases"/>
    <property type="match status" value="1"/>
</dbReference>
<dbReference type="InterPro" id="IPR027417">
    <property type="entry name" value="P-loop_NTPase"/>
</dbReference>
<dbReference type="InterPro" id="IPR005225">
    <property type="entry name" value="Small_GTP-bd"/>
</dbReference>
<dbReference type="InterPro" id="IPR024156">
    <property type="entry name" value="Small_GTPase_ARF"/>
</dbReference>
<dbReference type="InterPro" id="IPR019009">
    <property type="entry name" value="SRP_receptor_beta_su"/>
</dbReference>
<dbReference type="NCBIfam" id="TIGR00231">
    <property type="entry name" value="small_GTP"/>
    <property type="match status" value="1"/>
</dbReference>
<dbReference type="PANTHER" id="PTHR45909">
    <property type="entry name" value="ADP-RIBOSYLATION FACTOR-RELATED PROTEIN 1"/>
    <property type="match status" value="1"/>
</dbReference>
<dbReference type="PANTHER" id="PTHR45909:SF1">
    <property type="entry name" value="ADP-RIBOSYLATION FACTOR-RELATED PROTEIN 1"/>
    <property type="match status" value="1"/>
</dbReference>
<dbReference type="Pfam" id="PF09439">
    <property type="entry name" value="SRPRB"/>
    <property type="match status" value="1"/>
</dbReference>
<dbReference type="PRINTS" id="PR00449">
    <property type="entry name" value="RASTRNSFRMNG"/>
</dbReference>
<dbReference type="SUPFAM" id="SSF52540">
    <property type="entry name" value="P-loop containing nucleoside triphosphate hydrolases"/>
    <property type="match status" value="1"/>
</dbReference>
<comment type="function">
    <text evidence="4">Component of the signal recognition particle (SRP) complex receptor (SR) (By similarity). Ensures, in conjunction with the SRP complex, the correct targeting of the nascent secretory proteins to the endoplasmic reticulum membrane system (By similarity). May mediate the membrane association of SR (By similarity).</text>
</comment>
<comment type="subunit">
    <text evidence="3">Heterodimer of an alpha and a beta chain.</text>
</comment>
<comment type="subcellular location">
    <subcellularLocation>
        <location evidence="2">Endoplasmic reticulum membrane</location>
        <topology evidence="5">Single-pass membrane protein</topology>
    </subcellularLocation>
</comment>
<comment type="similarity">
    <text evidence="6">Belongs to the SRP receptor beta subunit family.</text>
</comment>
<proteinExistence type="inferred from homology"/>
<keyword id="KW-0256">Endoplasmic reticulum</keyword>
<keyword id="KW-0342">GTP-binding</keyword>
<keyword id="KW-0472">Membrane</keyword>
<keyword id="KW-0547">Nucleotide-binding</keyword>
<keyword id="KW-0675">Receptor</keyword>
<keyword id="KW-1185">Reference proteome</keyword>
<keyword id="KW-0812">Transmembrane</keyword>
<keyword id="KW-1133">Transmembrane helix</keyword>
<evidence type="ECO:0000250" key="1"/>
<evidence type="ECO:0000250" key="2">
    <source>
        <dbReference type="UniProtKB" id="O13950"/>
    </source>
</evidence>
<evidence type="ECO:0000250" key="3">
    <source>
        <dbReference type="UniProtKB" id="P36057"/>
    </source>
</evidence>
<evidence type="ECO:0000250" key="4">
    <source>
        <dbReference type="UniProtKB" id="P47758"/>
    </source>
</evidence>
<evidence type="ECO:0000255" key="5"/>
<evidence type="ECO:0000305" key="6"/>
<protein>
    <recommendedName>
        <fullName>Signal recognition particle receptor subunit beta</fullName>
        <shortName>SR-beta</shortName>
    </recommendedName>
</protein>